<sequence length="317" mass="35718">MVNRPYANMNDLANAVAESVQKYLDNSGQARNGLFQKTNNGERDIETERLALQHQLFHLTLDGKLQLSPLPSPVQSVLDIATGDSTWVHAFAEQNPSAYIVANDPSPTSKIPLGLSVIPDASDANEPWTYTRQFDFVHCRQHHRRLDEPRLFKQAFSSLTPGGWLEMQELSNPVTSDDGTLSENNPLSQWGRLLIEASKKMNRPVDNPAKYETWMREAGFVNCHTVAYNWPTNPWPADEKGKTLGLWNLYNVLQRFEEFSVALLVKVLGWEMDDAKTFLGNVKEELMNEGVHGYWPVYVVYGQKPAAPGSDVITDSE</sequence>
<proteinExistence type="evidence at transcript level"/>
<gene>
    <name evidence="7" type="primary">tdiE</name>
    <name type="ORF">AN8517</name>
</gene>
<protein>
    <recommendedName>
        <fullName evidence="8">Probable methyltransferase tdiE</fullName>
        <ecNumber evidence="10">2.1.1.-</ecNumber>
    </recommendedName>
    <alternativeName>
        <fullName evidence="7">Terrequinone biosynthesis protein D</fullName>
    </alternativeName>
</protein>
<feature type="chain" id="PRO_0000436368" description="Probable methyltransferase tdiE">
    <location>
        <begin position="1"/>
        <end position="317"/>
    </location>
</feature>
<accession>A7XRZ1</accession>
<accession>C8VEN6</accession>
<accession>Q5AT60</accession>
<evidence type="ECO:0000269" key="1">
    <source>
    </source>
</evidence>
<evidence type="ECO:0000269" key="2">
    <source>
    </source>
</evidence>
<evidence type="ECO:0000269" key="3">
    <source>
    </source>
</evidence>
<evidence type="ECO:0000269" key="4">
    <source>
    </source>
</evidence>
<evidence type="ECO:0000269" key="5">
    <source>
    </source>
</evidence>
<evidence type="ECO:0000269" key="6">
    <source>
    </source>
</evidence>
<evidence type="ECO:0000303" key="7">
    <source>
    </source>
</evidence>
<evidence type="ECO:0000303" key="8">
    <source>
    </source>
</evidence>
<evidence type="ECO:0000305" key="9"/>
<evidence type="ECO:0000305" key="10">
    <source>
    </source>
</evidence>
<organism>
    <name type="scientific">Emericella nidulans (strain FGSC A4 / ATCC 38163 / CBS 112.46 / NRRL 194 / M139)</name>
    <name type="common">Aspergillus nidulans</name>
    <dbReference type="NCBI Taxonomy" id="227321"/>
    <lineage>
        <taxon>Eukaryota</taxon>
        <taxon>Fungi</taxon>
        <taxon>Dikarya</taxon>
        <taxon>Ascomycota</taxon>
        <taxon>Pezizomycotina</taxon>
        <taxon>Eurotiomycetes</taxon>
        <taxon>Eurotiomycetidae</taxon>
        <taxon>Eurotiales</taxon>
        <taxon>Aspergillaceae</taxon>
        <taxon>Aspergillus</taxon>
        <taxon>Aspergillus subgen. Nidulantes</taxon>
    </lineage>
</organism>
<dbReference type="EC" id="2.1.1.-" evidence="10"/>
<dbReference type="EMBL" id="EF550585">
    <property type="protein sequence ID" value="ABU51606.1"/>
    <property type="molecule type" value="mRNA"/>
</dbReference>
<dbReference type="EMBL" id="BN001305">
    <property type="protein sequence ID" value="CBF80718.1"/>
    <property type="status" value="ALT_SEQ"/>
    <property type="molecule type" value="Genomic_DNA"/>
</dbReference>
<dbReference type="EMBL" id="AACD01000154">
    <property type="protein sequence ID" value="EAA66861.1"/>
    <property type="status" value="ALT_SEQ"/>
    <property type="molecule type" value="Genomic_DNA"/>
</dbReference>
<dbReference type="EMBL" id="AACD01000155">
    <property type="protein sequence ID" value="EAA66873.1"/>
    <property type="status" value="ALT_SEQ"/>
    <property type="molecule type" value="Genomic_DNA"/>
</dbReference>
<dbReference type="RefSeq" id="XP_681786.1">
    <property type="nucleotide sequence ID" value="XM_676694.1"/>
</dbReference>
<dbReference type="RefSeq" id="XP_681789.1">
    <property type="nucleotide sequence ID" value="XM_676697.1"/>
</dbReference>
<dbReference type="STRING" id="227321.A7XRZ1"/>
<dbReference type="KEGG" id="ani:ANIA_08520"/>
<dbReference type="VEuPathDB" id="FungiDB:AN8520"/>
<dbReference type="InParanoid" id="A7XRZ1"/>
<dbReference type="OrthoDB" id="2013972at2759"/>
<dbReference type="Proteomes" id="UP000000560">
    <property type="component" value="Chromosome V"/>
</dbReference>
<dbReference type="GO" id="GO:0003824">
    <property type="term" value="F:catalytic activity"/>
    <property type="evidence" value="ECO:0000315"/>
    <property type="project" value="UniProt"/>
</dbReference>
<dbReference type="GO" id="GO:0008168">
    <property type="term" value="F:methyltransferase activity"/>
    <property type="evidence" value="ECO:0007669"/>
    <property type="project" value="UniProtKB-KW"/>
</dbReference>
<dbReference type="GO" id="GO:0032259">
    <property type="term" value="P:methylation"/>
    <property type="evidence" value="ECO:0007669"/>
    <property type="project" value="UniProtKB-KW"/>
</dbReference>
<dbReference type="GO" id="GO:0044550">
    <property type="term" value="P:secondary metabolite biosynthetic process"/>
    <property type="evidence" value="ECO:0000314"/>
    <property type="project" value="AspGD"/>
</dbReference>
<dbReference type="GO" id="GO:0045461">
    <property type="term" value="P:sterigmatocystin biosynthetic process"/>
    <property type="evidence" value="ECO:0000315"/>
    <property type="project" value="AspGD"/>
</dbReference>
<dbReference type="GO" id="GO:1900796">
    <property type="term" value="P:terrequinone A biosynthetic process"/>
    <property type="evidence" value="ECO:0000315"/>
    <property type="project" value="GO_Central"/>
</dbReference>
<dbReference type="FunFam" id="3.40.50.150:FF:000952">
    <property type="entry name" value="Probable methyltransferase tdiE"/>
    <property type="match status" value="1"/>
</dbReference>
<dbReference type="Gene3D" id="3.40.50.150">
    <property type="entry name" value="Vaccinia Virus protein VP39"/>
    <property type="match status" value="1"/>
</dbReference>
<dbReference type="InterPro" id="IPR029063">
    <property type="entry name" value="SAM-dependent_MTases_sf"/>
</dbReference>
<dbReference type="PANTHER" id="PTHR43591">
    <property type="entry name" value="METHYLTRANSFERASE"/>
    <property type="match status" value="1"/>
</dbReference>
<dbReference type="PANTHER" id="PTHR43591:SF102">
    <property type="entry name" value="S-ADENOSYL-L-METHIONINE-DEPENDENT METHYLTRANSFERASE"/>
    <property type="match status" value="1"/>
</dbReference>
<dbReference type="Pfam" id="PF13489">
    <property type="entry name" value="Methyltransf_23"/>
    <property type="match status" value="1"/>
</dbReference>
<dbReference type="SUPFAM" id="SSF53335">
    <property type="entry name" value="S-adenosyl-L-methionine-dependent methyltransferases"/>
    <property type="match status" value="1"/>
</dbReference>
<name>TDIE_EMENI</name>
<keyword id="KW-0489">Methyltransferase</keyword>
<keyword id="KW-1185">Reference proteome</keyword>
<keyword id="KW-0949">S-adenosyl-L-methionine</keyword>
<keyword id="KW-0808">Transferase</keyword>
<comment type="function">
    <text evidence="1 2 3 4 5">Probable methyltransferase; part of the gene cluster that mediates the biosynthesis of terrequinone A, an antitumor agent (PubMed:16426969, PubMed:17291795, PubMed:17704773, PubMed:22083274). The first step in the biosynthetic pathway for terrequinone A is formation of indole pyruvic acid (IPA) from L-tryptophan by the aminotransferase tdiD (PubMed:17704773). The nonribosomal peptide synthase tdiA then immediately converts unstable IPA to didemethylasterriquinone D (DDAQ D), via condensation of 2 IPA molecules (PubMed:17704773). The symmetric connectivity of the 2 IPA molecules is thought to arise by head-to-tail dual Claisen condensations facilitated by the TE domain (PubMed:17704773). TdiB then catalyzes reverse prenylation by transferring dimethylallyl diphosphate to carbon atom 2' of DDAQ D, to yield asterriquinone C-1 (PubMed:18029206). Finally, tdiC and tdiE enzymes robustly convert asterriquinone C-1 to terrequinone A via a transformation involving regular prenylation at carbon atom 5, which requires elimination of the hydroxy group on C-5 (PubMed:17704773, PubMed:18029206).</text>
</comment>
<comment type="pathway">
    <text evidence="2 3">Secondary metabolite biosynthesis.</text>
</comment>
<comment type="induction">
    <text evidence="1 2 6">Expressed during both sexual and asexual development (PubMed:26773375). Expression is positively regulated by the secondary metabolism regulator laeA (PubMed:16426969, PubMed:17291795).</text>
</comment>
<comment type="disruption phenotype">
    <text evidence="2">Impairs the production of terrequinone A (PubMed:17291795).</text>
</comment>
<comment type="similarity">
    <text evidence="9">Belongs to the methyltransferase superfamily. LaeA methyltransferase family.</text>
</comment>
<comment type="sequence caution" evidence="9">
    <conflict type="erroneous gene model prediction">
        <sequence resource="EMBL-CDS" id="CBF80718"/>
    </conflict>
</comment>
<comment type="sequence caution" evidence="9">
    <conflict type="erroneous gene model prediction">
        <sequence resource="EMBL-CDS" id="EAA66861"/>
    </conflict>
</comment>
<comment type="sequence caution" evidence="9">
    <conflict type="erroneous gene model prediction">
        <sequence resource="EMBL-CDS" id="EAA66873"/>
    </conflict>
</comment>
<reference key="1">
    <citation type="journal article" date="2007" name="Nat. Chem. Biol.">
        <title>Terrequinone A biosynthesis through L-tryptophan oxidation, dimerization and bisprenylation.</title>
        <authorList>
            <person name="Balibar C.J."/>
            <person name="Howard-Jones A.R."/>
            <person name="Walsh C.T."/>
        </authorList>
    </citation>
    <scope>NUCLEOTIDE SEQUENCE [MRNA]</scope>
    <source>
        <strain>FGSC A4 / ATCC 38163 / CBS 112.46 / NRRL 194 / M139</strain>
    </source>
</reference>
<reference key="2">
    <citation type="journal article" date="2005" name="Nature">
        <title>Sequencing of Aspergillus nidulans and comparative analysis with A. fumigatus and A. oryzae.</title>
        <authorList>
            <person name="Galagan J.E."/>
            <person name="Calvo S.E."/>
            <person name="Cuomo C."/>
            <person name="Ma L.-J."/>
            <person name="Wortman J.R."/>
            <person name="Batzoglou S."/>
            <person name="Lee S.-I."/>
            <person name="Bastuerkmen M."/>
            <person name="Spevak C.C."/>
            <person name="Clutterbuck J."/>
            <person name="Kapitonov V."/>
            <person name="Jurka J."/>
            <person name="Scazzocchio C."/>
            <person name="Farman M.L."/>
            <person name="Butler J."/>
            <person name="Purcell S."/>
            <person name="Harris S."/>
            <person name="Braus G.H."/>
            <person name="Draht O."/>
            <person name="Busch S."/>
            <person name="D'Enfert C."/>
            <person name="Bouchier C."/>
            <person name="Goldman G.H."/>
            <person name="Bell-Pedersen D."/>
            <person name="Griffiths-Jones S."/>
            <person name="Doonan J.H."/>
            <person name="Yu J."/>
            <person name="Vienken K."/>
            <person name="Pain A."/>
            <person name="Freitag M."/>
            <person name="Selker E.U."/>
            <person name="Archer D.B."/>
            <person name="Penalva M.A."/>
            <person name="Oakley B.R."/>
            <person name="Momany M."/>
            <person name="Tanaka T."/>
            <person name="Kumagai T."/>
            <person name="Asai K."/>
            <person name="Machida M."/>
            <person name="Nierman W.C."/>
            <person name="Denning D.W."/>
            <person name="Caddick M.X."/>
            <person name="Hynes M."/>
            <person name="Paoletti M."/>
            <person name="Fischer R."/>
            <person name="Miller B.L."/>
            <person name="Dyer P.S."/>
            <person name="Sachs M.S."/>
            <person name="Osmani S.A."/>
            <person name="Birren B.W."/>
        </authorList>
    </citation>
    <scope>NUCLEOTIDE SEQUENCE [LARGE SCALE GENOMIC DNA]</scope>
    <source>
        <strain>FGSC A4 / ATCC 38163 / CBS 112.46 / NRRL 194 / M139</strain>
    </source>
</reference>
<reference key="3">
    <citation type="journal article" date="2009" name="Fungal Genet. Biol.">
        <title>The 2008 update of the Aspergillus nidulans genome annotation: a community effort.</title>
        <authorList>
            <person name="Wortman J.R."/>
            <person name="Gilsenan J.M."/>
            <person name="Joardar V."/>
            <person name="Deegan J."/>
            <person name="Clutterbuck J."/>
            <person name="Andersen M.R."/>
            <person name="Archer D."/>
            <person name="Bencina M."/>
            <person name="Braus G."/>
            <person name="Coutinho P."/>
            <person name="von Dohren H."/>
            <person name="Doonan J."/>
            <person name="Driessen A.J."/>
            <person name="Durek P."/>
            <person name="Espeso E."/>
            <person name="Fekete E."/>
            <person name="Flipphi M."/>
            <person name="Estrada C.G."/>
            <person name="Geysens S."/>
            <person name="Goldman G."/>
            <person name="de Groot P.W."/>
            <person name="Hansen K."/>
            <person name="Harris S.D."/>
            <person name="Heinekamp T."/>
            <person name="Helmstaedt K."/>
            <person name="Henrissat B."/>
            <person name="Hofmann G."/>
            <person name="Homan T."/>
            <person name="Horio T."/>
            <person name="Horiuchi H."/>
            <person name="James S."/>
            <person name="Jones M."/>
            <person name="Karaffa L."/>
            <person name="Karanyi Z."/>
            <person name="Kato M."/>
            <person name="Keller N."/>
            <person name="Kelly D.E."/>
            <person name="Kiel J.A."/>
            <person name="Kim J.M."/>
            <person name="van der Klei I.J."/>
            <person name="Klis F.M."/>
            <person name="Kovalchuk A."/>
            <person name="Krasevec N."/>
            <person name="Kubicek C.P."/>
            <person name="Liu B."/>
            <person name="Maccabe A."/>
            <person name="Meyer V."/>
            <person name="Mirabito P."/>
            <person name="Miskei M."/>
            <person name="Mos M."/>
            <person name="Mullins J."/>
            <person name="Nelson D.R."/>
            <person name="Nielsen J."/>
            <person name="Oakley B.R."/>
            <person name="Osmani S.A."/>
            <person name="Pakula T."/>
            <person name="Paszewski A."/>
            <person name="Paulsen I."/>
            <person name="Pilsyk S."/>
            <person name="Pocsi I."/>
            <person name="Punt P.J."/>
            <person name="Ram A.F."/>
            <person name="Ren Q."/>
            <person name="Robellet X."/>
            <person name="Robson G."/>
            <person name="Seiboth B."/>
            <person name="van Solingen P."/>
            <person name="Specht T."/>
            <person name="Sun J."/>
            <person name="Taheri-Talesh N."/>
            <person name="Takeshita N."/>
            <person name="Ussery D."/>
            <person name="vanKuyk P.A."/>
            <person name="Visser H."/>
            <person name="van de Vondervoort P.J."/>
            <person name="de Vries R.P."/>
            <person name="Walton J."/>
            <person name="Xiang X."/>
            <person name="Xiong Y."/>
            <person name="Zeng A.P."/>
            <person name="Brandt B.W."/>
            <person name="Cornell M.J."/>
            <person name="van den Hondel C.A."/>
            <person name="Visser J."/>
            <person name="Oliver S.G."/>
            <person name="Turner G."/>
        </authorList>
    </citation>
    <scope>GENOME REANNOTATION</scope>
    <source>
        <strain>FGSC A4 / ATCC 38163 / CBS 112.46 / NRRL 194 / M139</strain>
    </source>
</reference>
<reference key="4">
    <citation type="journal article" date="2006" name="Chem. Biol.">
        <title>Genomic mining for Aspergillus natural products.</title>
        <authorList>
            <person name="Bok J.W."/>
            <person name="Hoffmeister D."/>
            <person name="Maggio-Hall L.A."/>
            <person name="Murillo R."/>
            <person name="Glasner J.D."/>
            <person name="Keller N.P."/>
        </authorList>
    </citation>
    <scope>IDENTIFICATION</scope>
    <scope>INDUCTION</scope>
</reference>
<reference key="5">
    <citation type="journal article" date="2007" name="Fungal Genet. Biol.">
        <title>Accurate prediction of the Aspergillus nidulans terrequinone gene cluster boundaries using the transcriptional regulator LaeA.</title>
        <authorList>
            <person name="Bouhired S."/>
            <person name="Weber M."/>
            <person name="Kempf-Sontag A."/>
            <person name="Keller N.P."/>
            <person name="Hoffmeister D."/>
        </authorList>
    </citation>
    <scope>IDENTIFICATION</scope>
    <scope>INDUCTION</scope>
    <scope>FUNCTION</scope>
    <scope>DISRUPTION PHENOTYPE</scope>
</reference>
<reference key="6">
    <citation type="journal article" date="2008" name="Fungal Genet. Biol.">
        <title>The Aspergillus nidulans enzyme TdiB catalyzes prenyltransfer to the precursor of bioactive asterriquinones.</title>
        <authorList>
            <person name="Schneider P."/>
            <person name="Weber M."/>
            <person name="Hoffmeister D."/>
        </authorList>
    </citation>
    <scope>FUNCTION</scope>
</reference>
<reference key="7">
    <citation type="journal article" date="2012" name="Appl. Microbiol. Biotechnol.">
        <title>Heterologous expression system in Aspergillus oryzae for fungal biosynthetic gene clusters of secondary metabolites.</title>
        <authorList>
            <person name="Sakai K."/>
            <person name="Kinoshita H."/>
            <person name="Nihira T."/>
        </authorList>
    </citation>
    <scope>FUNCTION</scope>
</reference>
<reference key="8">
    <citation type="journal article" date="2016" name="Fungal Genet. Biol.">
        <title>Changes of global gene expression and secondary metabolite accumulation during light-dependent Aspergillus nidulans development.</title>
        <authorList>
            <person name="Bayram O."/>
            <person name="Feussner K."/>
            <person name="Dumkow M."/>
            <person name="Herrfurth C."/>
            <person name="Feussner I."/>
            <person name="Braus G.H."/>
        </authorList>
    </citation>
    <scope>INDUCTION</scope>
</reference>